<protein>
    <recommendedName>
        <fullName>Potassium-transporting ATPase alpha chain 1</fullName>
        <ecNumber evidence="9 10">7.2.2.19</ecNumber>
    </recommendedName>
    <alternativeName>
        <fullName evidence="11">Gastric H(+)/K(+) ATPase subunit alpha</fullName>
    </alternativeName>
    <alternativeName>
        <fullName>Proton pump</fullName>
    </alternativeName>
</protein>
<keyword id="KW-0067">ATP-binding</keyword>
<keyword id="KW-1003">Cell membrane</keyword>
<keyword id="KW-0375">Hydrogen ion transport</keyword>
<keyword id="KW-0406">Ion transport</keyword>
<keyword id="KW-0460">Magnesium</keyword>
<keyword id="KW-0472">Membrane</keyword>
<keyword id="KW-0479">Metal-binding</keyword>
<keyword id="KW-0547">Nucleotide-binding</keyword>
<keyword id="KW-0597">Phosphoprotein</keyword>
<keyword id="KW-0630">Potassium</keyword>
<keyword id="KW-0633">Potassium transport</keyword>
<keyword id="KW-1185">Reference proteome</keyword>
<keyword id="KW-1278">Translocase</keyword>
<keyword id="KW-0812">Transmembrane</keyword>
<keyword id="KW-1133">Transmembrane helix</keyword>
<keyword id="KW-0813">Transport</keyword>
<sequence>MGKENYELYSVELGTGPGGDMAAKMSKKKAGGGGGKKKEKLENMKKEMEMNDHQLSVSELEQKYQTSATKGLKASLAAELLLRDGPNALRPPRGTPEYVKFARQLAGGLQCLMWVAAAICLIAFAIQASEGDLTTDDNLYLALALIAVVVVTGCFGYYQEFKSTNIIASFKNLVPQQATVIRDGDKFQINADQLVVGDLVEMKGGDRVPADIRILSAQGCKVDNSSLTGESEPQTRSPECTHESPLETRNIAFFSTMCLEGTAQGLVVSTGDRTIIGRIASLASGVENEKTPIAIEIEHFVDIIAGLAILFGATFFVVAMCIGYTFLRAMVFFMAIVVAYVPEGLLATVTVCLSLTAKRLASKNCVVKNLEAVETLGSTSVICSDKTGTLTQNRMTVSHLWFDNHIHTADTTEDQSGQTFDQSSETWRALCRVLTLCNRAAFKSGQDAVPVPKRIVIGDASETALLKFSELTLGNAMGYRDRFPKVCEIPFNSTNKFQLSIHTLEDPRDPRHLLVMKGAPERVLERCSSILIKGQELPLDEQWREAFQTAYLSLGGLGERVLGFCQLYLNEKDYPPGYTFDVEAMNFPSSGLCFAGLVSMIDPPRATVPDAVLKCRTAGIRVIMVTGDHPITAKAIAASVGIISEGSETVEDIAARLRMPVDQVNKKDARACVINGMQLKDMDPSELVEALRTHPEMVFARTSPQQKLVIVESCQRLGAIVAVTGDGVNDSPALKKADIGVAMGIAGSDAAKNAADMILLDDNFASIVTGVEQGRLIFDNLKKSIAYTLTKNIPELTPYLIYITVSVPLPLGCITILFIELCTDIFPSVSLAYEKAESDIMHLRPRNPRRDRLVNEPLAAYSYFQIGAIQSFAGFADYFTAMAQEGWFPLLCVGLRPQWEDHHLQDLQDSYGQEWTFGQRLYQQYTCYTVFFISIEMCQIADVLIRKTRRLSAFQQGFFRNRILVIAIVFQVCIGCFLCYCPGMPNIFNFMPIRFQWWLVPMPFGLLIFVYDEIRKLGVRCCPGSWWDQELYY</sequence>
<accession>P09626</accession>
<accession>P70511</accession>
<accession>P97892</accession>
<accession>Q63253</accession>
<accession>Q6LD86</accession>
<evidence type="ECO:0000250" key="1"/>
<evidence type="ECO:0000250" key="2">
    <source>
        <dbReference type="UniProtKB" id="P19156"/>
    </source>
</evidence>
<evidence type="ECO:0000250" key="3">
    <source>
        <dbReference type="UniProtKB" id="P20648"/>
    </source>
</evidence>
<evidence type="ECO:0000250" key="4">
    <source>
        <dbReference type="UniProtKB" id="P50993"/>
    </source>
</evidence>
<evidence type="ECO:0000250" key="5">
    <source>
        <dbReference type="UniProtKB" id="Q64436"/>
    </source>
</evidence>
<evidence type="ECO:0000250" key="6">
    <source>
        <dbReference type="UniProtKB" id="Q6PIE5"/>
    </source>
</evidence>
<evidence type="ECO:0000255" key="7"/>
<evidence type="ECO:0000256" key="8">
    <source>
        <dbReference type="SAM" id="MobiDB-lite"/>
    </source>
</evidence>
<evidence type="ECO:0000269" key="9">
    <source>
    </source>
</evidence>
<evidence type="ECO:0000269" key="10">
    <source>
    </source>
</evidence>
<evidence type="ECO:0000303" key="11">
    <source>
    </source>
</evidence>
<evidence type="ECO:0000305" key="12"/>
<evidence type="ECO:0000305" key="13">
    <source>
    </source>
</evidence>
<evidence type="ECO:0000305" key="14">
    <source>
    </source>
</evidence>
<evidence type="ECO:0007744" key="15">
    <source>
    </source>
</evidence>
<feature type="chain" id="PRO_0000046257" description="Potassium-transporting ATPase alpha chain 1">
    <location>
        <begin position="1"/>
        <end position="1033"/>
    </location>
</feature>
<feature type="topological domain" description="Cytoplasmic" evidence="7">
    <location>
        <begin position="1"/>
        <end position="96"/>
    </location>
</feature>
<feature type="transmembrane region" description="Helical" evidence="7">
    <location>
        <begin position="97"/>
        <end position="117"/>
    </location>
</feature>
<feature type="topological domain" description="Lumenal" evidence="7">
    <location>
        <begin position="118"/>
        <end position="140"/>
    </location>
</feature>
<feature type="transmembrane region" description="Helical" evidence="7">
    <location>
        <begin position="141"/>
        <end position="161"/>
    </location>
</feature>
<feature type="topological domain" description="Cytoplasmic" evidence="7">
    <location>
        <begin position="162"/>
        <end position="297"/>
    </location>
</feature>
<feature type="transmembrane region" description="Helical" evidence="7">
    <location>
        <begin position="298"/>
        <end position="317"/>
    </location>
</feature>
<feature type="topological domain" description="Lumenal" evidence="7">
    <location>
        <begin position="318"/>
        <end position="329"/>
    </location>
</feature>
<feature type="transmembrane region" description="Helical" evidence="7">
    <location>
        <begin position="330"/>
        <end position="347"/>
    </location>
</feature>
<feature type="topological domain" description="Cytoplasmic" evidence="7">
    <location>
        <begin position="348"/>
        <end position="781"/>
    </location>
</feature>
<feature type="transmembrane region" description="Helical" evidence="7">
    <location>
        <begin position="782"/>
        <end position="801"/>
    </location>
</feature>
<feature type="topological domain" description="Lumenal" evidence="7">
    <location>
        <begin position="802"/>
        <end position="811"/>
    </location>
</feature>
<feature type="transmembrane region" description="Helical" evidence="7">
    <location>
        <begin position="812"/>
        <end position="832"/>
    </location>
</feature>
<feature type="topological domain" description="Cytoplasmic" evidence="7">
    <location>
        <begin position="833"/>
        <end position="852"/>
    </location>
</feature>
<feature type="transmembrane region" description="Helical" evidence="7">
    <location>
        <begin position="853"/>
        <end position="875"/>
    </location>
</feature>
<feature type="topological domain" description="Lumenal" evidence="7">
    <location>
        <begin position="876"/>
        <end position="927"/>
    </location>
</feature>
<feature type="transmembrane region" description="Helical" evidence="7">
    <location>
        <begin position="928"/>
        <end position="947"/>
    </location>
</feature>
<feature type="topological domain" description="Cytoplasmic" evidence="7">
    <location>
        <begin position="948"/>
        <end position="961"/>
    </location>
</feature>
<feature type="transmembrane region" description="Helical" evidence="7">
    <location>
        <begin position="962"/>
        <end position="980"/>
    </location>
</feature>
<feature type="topological domain" description="Lumenal" evidence="7">
    <location>
        <begin position="981"/>
        <end position="995"/>
    </location>
</feature>
<feature type="transmembrane region" description="Helical" evidence="7">
    <location>
        <begin position="996"/>
        <end position="1016"/>
    </location>
</feature>
<feature type="topological domain" description="Cytoplasmic" evidence="7">
    <location>
        <begin position="1017"/>
        <end position="1033"/>
    </location>
</feature>
<feature type="region of interest" description="Disordered" evidence="8">
    <location>
        <begin position="14"/>
        <end position="39"/>
    </location>
</feature>
<feature type="compositionally biased region" description="Basic residues" evidence="8">
    <location>
        <begin position="25"/>
        <end position="38"/>
    </location>
</feature>
<feature type="active site" description="4-aspartylphosphate intermediate" evidence="2">
    <location>
        <position position="385"/>
    </location>
</feature>
<feature type="binding site" evidence="2">
    <location>
        <position position="338"/>
    </location>
    <ligand>
        <name>K(+)</name>
        <dbReference type="ChEBI" id="CHEBI:29103"/>
    </ligand>
</feature>
<feature type="binding site" evidence="2">
    <location>
        <position position="339"/>
    </location>
    <ligand>
        <name>K(+)</name>
        <dbReference type="ChEBI" id="CHEBI:29103"/>
    </ligand>
</feature>
<feature type="binding site" evidence="2">
    <location>
        <position position="341"/>
    </location>
    <ligand>
        <name>K(+)</name>
        <dbReference type="ChEBI" id="CHEBI:29103"/>
    </ligand>
</feature>
<feature type="binding site" evidence="2">
    <location>
        <position position="343"/>
    </location>
    <ligand>
        <name>K(+)</name>
        <dbReference type="ChEBI" id="CHEBI:29103"/>
    </ligand>
</feature>
<feature type="binding site" evidence="2">
    <location>
        <position position="385"/>
    </location>
    <ligand>
        <name>Mg(2+)</name>
        <dbReference type="ChEBI" id="CHEBI:18420"/>
    </ligand>
</feature>
<feature type="binding site" evidence="2">
    <location>
        <position position="387"/>
    </location>
    <ligand>
        <name>Mg(2+)</name>
        <dbReference type="ChEBI" id="CHEBI:18420"/>
    </ligand>
</feature>
<feature type="binding site" evidence="2">
    <location>
        <position position="726"/>
    </location>
    <ligand>
        <name>Mg(2+)</name>
        <dbReference type="ChEBI" id="CHEBI:18420"/>
    </ligand>
</feature>
<feature type="binding site" evidence="1">
    <location>
        <position position="730"/>
    </location>
    <ligand>
        <name>Mg(2+)</name>
        <dbReference type="ChEBI" id="CHEBI:18420"/>
    </ligand>
</feature>
<feature type="binding site" evidence="2">
    <location>
        <position position="795"/>
    </location>
    <ligand>
        <name>K(+)</name>
        <dbReference type="ChEBI" id="CHEBI:29103"/>
    </ligand>
</feature>
<feature type="binding site" evidence="2">
    <location>
        <position position="820"/>
    </location>
    <ligand>
        <name>K(+)</name>
        <dbReference type="ChEBI" id="CHEBI:29103"/>
    </ligand>
</feature>
<feature type="modified residue" description="Phosphotyrosine" evidence="2">
    <location>
        <position position="6"/>
    </location>
</feature>
<feature type="modified residue" description="Phosphotyrosine" evidence="2">
    <location>
        <position position="9"/>
    </location>
</feature>
<feature type="modified residue" description="Phosphoserine" evidence="2">
    <location>
        <position position="26"/>
    </location>
</feature>
<feature type="modified residue" description="Phosphoserine" evidence="6">
    <location>
        <position position="461"/>
    </location>
</feature>
<feature type="modified residue" description="Phosphoserine" evidence="4">
    <location>
        <position position="599"/>
    </location>
</feature>
<feature type="modified residue" description="Phosphoserine" evidence="15">
    <location>
        <position position="838"/>
    </location>
</feature>
<feature type="modified residue" description="Phosphoserine; by PKA" evidence="1">
    <location>
        <position position="952"/>
    </location>
</feature>
<feature type="mutagenesis site" description="Impaired transport activity." evidence="9">
    <original>K</original>
    <variation>A</variation>
    <variation>E</variation>
    <variation>R</variation>
    <variation>S</variation>
    <location>
        <position position="791"/>
    </location>
</feature>
<feature type="mutagenesis site" description="Impaired transport activity." evidence="9">
    <original>E</original>
    <variation>A</variation>
    <variation>D</variation>
    <variation>Q</variation>
    <location>
        <position position="820"/>
    </location>
</feature>
<feature type="sequence conflict" description="In Ref. 4; AAA72354." evidence="12" ref="4">
    <original>K</original>
    <variation>KA</variation>
    <location>
        <position position="3"/>
    </location>
</feature>
<reference key="1">
    <citation type="journal article" date="1986" name="J. Biol. Chem.">
        <title>Molecular cloning of the rat stomach (H+ + K+)-ATPase.</title>
        <authorList>
            <person name="Shull G.E."/>
            <person name="Lingrel J.B."/>
        </authorList>
    </citation>
    <scope>NUCLEOTIDE SEQUENCE [MRNA]</scope>
</reference>
<reference key="2">
    <citation type="submission" date="1987-02" db="EMBL/GenBank/DDBJ databases">
        <authorList>
            <person name="Shull G.E."/>
        </authorList>
    </citation>
    <scope>SEQUENCE REVISION</scope>
</reference>
<reference key="3">
    <citation type="journal article" date="1995" name="Am. J. Physiol.">
        <title>Expression and cellular localization of mRNA encoding the 'gastric' isoform of H(+)-K(+)-ATPase alpha-subunit in rat kidney.</title>
        <authorList>
            <person name="Ahn K.Y."/>
            <person name="Kone B.C."/>
        </authorList>
    </citation>
    <scope>NUCLEOTIDE SEQUENCE [MRNA] OF 54-507</scope>
</reference>
<reference key="4">
    <citation type="submission" date="1993-02" db="EMBL/GenBank/DDBJ databases">
        <authorList>
            <person name="Song I."/>
            <person name="Mortell P."/>
            <person name="Gantz I."/>
            <person name="Marino L.R."/>
            <person name="Yamada T."/>
        </authorList>
    </citation>
    <scope>NUCLEOTIDE SEQUENCE [GENOMIC DNA] OF 1-50</scope>
    <source>
        <tissue>Liver</tissue>
    </source>
</reference>
<reference key="5">
    <citation type="journal article" date="1991" name="FEBS Lett.">
        <title>Control region and gastric specific transcription of the rat H+,K(+)-ATPase alpha subunit gene.</title>
        <authorList>
            <person name="Oshiman K."/>
            <person name="Motajima K."/>
            <person name="Mahmood S."/>
            <person name="Shimada A."/>
            <person name="Tamura S."/>
            <person name="Maeda M."/>
            <person name="Futai M."/>
        </authorList>
    </citation>
    <scope>NUCLEOTIDE SEQUENCE [MRNA] OF 177-260 AND 436-466</scope>
    <source>
        <strain>Sprague-Dawley</strain>
    </source>
</reference>
<reference key="6">
    <citation type="journal article" date="2010" name="J. Biol. Chem.">
        <title>Deceleration of the E1P-E2P transition and ion transport by mutation of potentially salt bridge-forming residues Lys-791 and Glu-820 in gastric H+/K+-ATPase.</title>
        <authorList>
            <person name="Duerr K.L."/>
            <person name="Seuffert I."/>
            <person name="Friedrich T."/>
        </authorList>
    </citation>
    <scope>FUNCTION</scope>
    <scope>CATALYTIC ACTIVITY</scope>
    <scope>MUTAGENESIS OF LYS-791 AND GLU-820</scope>
</reference>
<reference key="7">
    <citation type="journal article" date="2012" name="Nat. Commun.">
        <title>Quantitative maps of protein phosphorylation sites across 14 different rat organs and tissues.</title>
        <authorList>
            <person name="Lundby A."/>
            <person name="Secher A."/>
            <person name="Lage K."/>
            <person name="Nordsborg N.B."/>
            <person name="Dmytriyev A."/>
            <person name="Lundby C."/>
            <person name="Olsen J.V."/>
        </authorList>
    </citation>
    <scope>PHOSPHORYLATION [LARGE SCALE ANALYSIS] AT SER-838</scope>
    <scope>IDENTIFICATION BY MASS SPECTROMETRY [LARGE SCALE ANALYSIS]</scope>
</reference>
<reference key="8">
    <citation type="journal article" date="2012" name="PLoS ONE">
        <title>Control of gastric H,K-ATPase activity by cations, voltage and intracellular pH analyzed by voltage clamp fluorometry in Xenopus oocytes.</title>
        <authorList>
            <person name="Duerr K.L."/>
            <person name="Tavraz N.N."/>
            <person name="Friedrich T."/>
        </authorList>
    </citation>
    <scope>FUNCTION</scope>
    <scope>CATALYTIC ACTIVITY</scope>
</reference>
<name>ATP4A_RAT</name>
<comment type="function">
    <text evidence="2 5 9 10">The catalytic subunit of the gastric H(+)/K(+) ATPase pump which transports H(+) ions in exchange for K(+) ions across the apical membrane of parietal cells (PubMed:20921224, PubMed:22448261). Uses ATP as an energy source to pump H(+) ions to the gastric lumen while transporting K(+) ion from the lumen into the cell (PubMed:20921224, PubMed:22448261). Remarkably generates a million-fold proton gradient across the gastric parietal cell membrane, acidifying the gastric juice down to pH 1 (By similarity). Within a transport cycle, the transfer of a H(+) ion across the membrane is coupled to ATP hydrolysis and is associated with a transient phosphorylation that shifts the pump conformation from inward-facing (E1) to outward-facing state (E2). The release of the H(+) ion in the stomach lumen is followed by binding of K(+) ion converting the pump conformation back to the E1 state (By similarity) (PubMed:20921224, PubMed:22448261).</text>
</comment>
<comment type="catalytic activity">
    <reaction evidence="9 10">
        <text>K(+)(out) + ATP + H2O + H(+)(in) = K(+)(in) + ADP + phosphate + 2 H(+)(out)</text>
        <dbReference type="Rhea" id="RHEA:22044"/>
        <dbReference type="ChEBI" id="CHEBI:15377"/>
        <dbReference type="ChEBI" id="CHEBI:15378"/>
        <dbReference type="ChEBI" id="CHEBI:29103"/>
        <dbReference type="ChEBI" id="CHEBI:30616"/>
        <dbReference type="ChEBI" id="CHEBI:43474"/>
        <dbReference type="ChEBI" id="CHEBI:456216"/>
        <dbReference type="EC" id="7.2.2.19"/>
    </reaction>
    <physiologicalReaction direction="left-to-right" evidence="13 14">
        <dbReference type="Rhea" id="RHEA:22045"/>
    </physiologicalReaction>
</comment>
<comment type="subunit">
    <text evidence="2">The gastric H(+)/K(+) ATPase pump is composed of the catalytic alpha subunit ATP4A and the regulatory beta subunit ATP4B. Interacts (via the P-domain) with ATP4B (via N-terminus); this interaction stabilizes the lumenal-open E2 conformation state and prevents the reverse reaction of the transport cycle.</text>
</comment>
<comment type="subcellular location">
    <subcellularLocation>
        <location evidence="3">Apical cell membrane</location>
        <topology evidence="7">Multi-pass membrane protein</topology>
    </subcellularLocation>
    <text evidence="3">Localized in the apical canalicular membrane of parietal cells (By similarity).</text>
</comment>
<comment type="similarity">
    <text evidence="12">Belongs to the cation transport ATPase (P-type) (TC 3.A.3) family. Type IIC subfamily.</text>
</comment>
<gene>
    <name type="primary">Atp4a</name>
    <name type="synonym">Hka</name>
</gene>
<proteinExistence type="evidence at protein level"/>
<dbReference type="EC" id="7.2.2.19" evidence="9 10"/>
<dbReference type="EMBL" id="J02649">
    <property type="protein sequence ID" value="AAA66036.1"/>
    <property type="molecule type" value="mRNA"/>
</dbReference>
<dbReference type="EMBL" id="S74801">
    <property type="protein sequence ID" value="AAP31528.1"/>
    <property type="molecule type" value="mRNA"/>
</dbReference>
<dbReference type="EMBL" id="L11569">
    <property type="protein sequence ID" value="AAA72354.1"/>
    <property type="molecule type" value="Genomic_DNA"/>
</dbReference>
<dbReference type="EMBL" id="X61934">
    <property type="protein sequence ID" value="CAA43938.1"/>
    <property type="molecule type" value="Genomic_DNA"/>
</dbReference>
<dbReference type="EMBL" id="X61935">
    <property type="protein sequence ID" value="CAA43939.1"/>
    <property type="molecule type" value="Genomic_DNA"/>
</dbReference>
<dbReference type="PIR" id="A25344">
    <property type="entry name" value="A25344"/>
</dbReference>
<dbReference type="SMR" id="P09626"/>
<dbReference type="ComplexPortal" id="CPX-2183">
    <property type="entry name" value="Hydrogen:potassium-exchanging ATPase complex"/>
</dbReference>
<dbReference type="FunCoup" id="P09626">
    <property type="interactions" value="65"/>
</dbReference>
<dbReference type="STRING" id="10116.ENSRNOP00000028508"/>
<dbReference type="BindingDB" id="P09626"/>
<dbReference type="ChEMBL" id="CHEMBL2095199"/>
<dbReference type="iPTMnet" id="P09626"/>
<dbReference type="PhosphoSitePlus" id="P09626"/>
<dbReference type="SwissPalm" id="P09626"/>
<dbReference type="jPOST" id="P09626"/>
<dbReference type="PaxDb" id="10116-ENSRNOP00000028508"/>
<dbReference type="UCSC" id="RGD:2177">
    <property type="organism name" value="rat"/>
</dbReference>
<dbReference type="AGR" id="RGD:2177"/>
<dbReference type="RGD" id="2177">
    <property type="gene designation" value="Atp4a"/>
</dbReference>
<dbReference type="eggNOG" id="KOG0203">
    <property type="taxonomic scope" value="Eukaryota"/>
</dbReference>
<dbReference type="InParanoid" id="P09626"/>
<dbReference type="PhylomeDB" id="P09626"/>
<dbReference type="BRENDA" id="7.2.2.19">
    <property type="organism ID" value="5301"/>
</dbReference>
<dbReference type="Reactome" id="R-RNO-936837">
    <property type="pathway name" value="Ion transport by P-type ATPases"/>
</dbReference>
<dbReference type="PRO" id="PR:P09626"/>
<dbReference type="Proteomes" id="UP000002494">
    <property type="component" value="Unplaced"/>
</dbReference>
<dbReference type="GO" id="GO:0016324">
    <property type="term" value="C:apical plasma membrane"/>
    <property type="evidence" value="ECO:0000314"/>
    <property type="project" value="UniProtKB"/>
</dbReference>
<dbReference type="GO" id="GO:0005886">
    <property type="term" value="C:plasma membrane"/>
    <property type="evidence" value="ECO:0000266"/>
    <property type="project" value="RGD"/>
</dbReference>
<dbReference type="GO" id="GO:0005889">
    <property type="term" value="C:potassium:proton exchanging ATPase complex"/>
    <property type="evidence" value="ECO:0000266"/>
    <property type="project" value="RGD"/>
</dbReference>
<dbReference type="GO" id="GO:0005524">
    <property type="term" value="F:ATP binding"/>
    <property type="evidence" value="ECO:0007669"/>
    <property type="project" value="UniProtKB-KW"/>
</dbReference>
<dbReference type="GO" id="GO:0016887">
    <property type="term" value="F:ATP hydrolysis activity"/>
    <property type="evidence" value="ECO:0007669"/>
    <property type="project" value="InterPro"/>
</dbReference>
<dbReference type="GO" id="GO:0000287">
    <property type="term" value="F:magnesium ion binding"/>
    <property type="evidence" value="ECO:0000250"/>
    <property type="project" value="UniProtKB"/>
</dbReference>
<dbReference type="GO" id="GO:0008900">
    <property type="term" value="F:P-type potassium:proton transporter activity"/>
    <property type="evidence" value="ECO:0000266"/>
    <property type="project" value="RGD"/>
</dbReference>
<dbReference type="GO" id="GO:0005391">
    <property type="term" value="F:P-type sodium:potassium-exchanging transporter activity"/>
    <property type="evidence" value="ECO:0000318"/>
    <property type="project" value="GO_Central"/>
</dbReference>
<dbReference type="GO" id="GO:0030955">
    <property type="term" value="F:potassium ion binding"/>
    <property type="evidence" value="ECO:0000250"/>
    <property type="project" value="UniProtKB"/>
</dbReference>
<dbReference type="GO" id="GO:0001696">
    <property type="term" value="P:gastric acid secretion"/>
    <property type="evidence" value="ECO:0000304"/>
    <property type="project" value="RGD"/>
</dbReference>
<dbReference type="GO" id="GO:0030007">
    <property type="term" value="P:intracellular potassium ion homeostasis"/>
    <property type="evidence" value="ECO:0000318"/>
    <property type="project" value="GO_Central"/>
</dbReference>
<dbReference type="GO" id="GO:0006883">
    <property type="term" value="P:intracellular sodium ion homeostasis"/>
    <property type="evidence" value="ECO:0000318"/>
    <property type="project" value="GO_Central"/>
</dbReference>
<dbReference type="GO" id="GO:0045851">
    <property type="term" value="P:pH reduction"/>
    <property type="evidence" value="ECO:0000266"/>
    <property type="project" value="RGD"/>
</dbReference>
<dbReference type="GO" id="GO:1990573">
    <property type="term" value="P:potassium ion import across plasma membrane"/>
    <property type="evidence" value="ECO:0000318"/>
    <property type="project" value="GO_Central"/>
</dbReference>
<dbReference type="GO" id="GO:0071805">
    <property type="term" value="P:potassium ion transmembrane transport"/>
    <property type="evidence" value="ECO:0000266"/>
    <property type="project" value="RGD"/>
</dbReference>
<dbReference type="GO" id="GO:1902600">
    <property type="term" value="P:proton transmembrane transport"/>
    <property type="evidence" value="ECO:0000318"/>
    <property type="project" value="GO_Central"/>
</dbReference>
<dbReference type="GO" id="GO:0010155">
    <property type="term" value="P:regulation of proton transport"/>
    <property type="evidence" value="ECO:0000266"/>
    <property type="project" value="RGD"/>
</dbReference>
<dbReference type="GO" id="GO:0009410">
    <property type="term" value="P:response to xenobiotic stimulus"/>
    <property type="evidence" value="ECO:0000266"/>
    <property type="project" value="RGD"/>
</dbReference>
<dbReference type="GO" id="GO:0036376">
    <property type="term" value="P:sodium ion export across plasma membrane"/>
    <property type="evidence" value="ECO:0000318"/>
    <property type="project" value="GO_Central"/>
</dbReference>
<dbReference type="CDD" id="cd02608">
    <property type="entry name" value="P-type_ATPase_Na-K_like"/>
    <property type="match status" value="1"/>
</dbReference>
<dbReference type="FunFam" id="3.40.50.1000:FF:000001">
    <property type="entry name" value="Phospholipid-transporting ATPase IC"/>
    <property type="match status" value="1"/>
</dbReference>
<dbReference type="FunFam" id="1.20.1110.10:FF:000079">
    <property type="entry name" value="Sodium/potassium-transporting ATPase subunit alpha"/>
    <property type="match status" value="1"/>
</dbReference>
<dbReference type="FunFam" id="2.70.150.10:FF:000003">
    <property type="entry name" value="Sodium/potassium-transporting ATPase subunit alpha"/>
    <property type="match status" value="1"/>
</dbReference>
<dbReference type="FunFam" id="3.40.1110.10:FF:000001">
    <property type="entry name" value="Sodium/potassium-transporting ATPase subunit alpha"/>
    <property type="match status" value="1"/>
</dbReference>
<dbReference type="FunFam" id="3.40.50.1000:FF:000004">
    <property type="entry name" value="Sodium/potassium-transporting ATPase subunit alpha"/>
    <property type="match status" value="1"/>
</dbReference>
<dbReference type="FunFam" id="1.20.1110.10:FF:000095">
    <property type="entry name" value="Sodium/potassium-transporting ATPase subunit alpha-1"/>
    <property type="match status" value="1"/>
</dbReference>
<dbReference type="Gene3D" id="3.40.1110.10">
    <property type="entry name" value="Calcium-transporting ATPase, cytoplasmic domain N"/>
    <property type="match status" value="1"/>
</dbReference>
<dbReference type="Gene3D" id="2.70.150.10">
    <property type="entry name" value="Calcium-transporting ATPase, cytoplasmic transduction domain A"/>
    <property type="match status" value="1"/>
</dbReference>
<dbReference type="Gene3D" id="1.20.1110.10">
    <property type="entry name" value="Calcium-transporting ATPase, transmembrane domain"/>
    <property type="match status" value="1"/>
</dbReference>
<dbReference type="Gene3D" id="3.40.50.1000">
    <property type="entry name" value="HAD superfamily/HAD-like"/>
    <property type="match status" value="1"/>
</dbReference>
<dbReference type="InterPro" id="IPR006068">
    <property type="entry name" value="ATPase_P-typ_cation-transptr_C"/>
</dbReference>
<dbReference type="InterPro" id="IPR004014">
    <property type="entry name" value="ATPase_P-typ_cation-transptr_N"/>
</dbReference>
<dbReference type="InterPro" id="IPR023299">
    <property type="entry name" value="ATPase_P-typ_cyto_dom_N"/>
</dbReference>
<dbReference type="InterPro" id="IPR015127">
    <property type="entry name" value="ATPase_P-typ_H/K-transp_N"/>
</dbReference>
<dbReference type="InterPro" id="IPR018303">
    <property type="entry name" value="ATPase_P-typ_P_site"/>
</dbReference>
<dbReference type="InterPro" id="IPR023298">
    <property type="entry name" value="ATPase_P-typ_TM_dom_sf"/>
</dbReference>
<dbReference type="InterPro" id="IPR008250">
    <property type="entry name" value="ATPase_P-typ_transduc_dom_A_sf"/>
</dbReference>
<dbReference type="InterPro" id="IPR050510">
    <property type="entry name" value="Cation_transp_ATPase_P-type"/>
</dbReference>
<dbReference type="InterPro" id="IPR036412">
    <property type="entry name" value="HAD-like_sf"/>
</dbReference>
<dbReference type="InterPro" id="IPR023214">
    <property type="entry name" value="HAD_sf"/>
</dbReference>
<dbReference type="InterPro" id="IPR005775">
    <property type="entry name" value="P-type_ATPase_IIC"/>
</dbReference>
<dbReference type="InterPro" id="IPR001757">
    <property type="entry name" value="P_typ_ATPase"/>
</dbReference>
<dbReference type="InterPro" id="IPR044492">
    <property type="entry name" value="P_typ_ATPase_HD_dom"/>
</dbReference>
<dbReference type="NCBIfam" id="TIGR01106">
    <property type="entry name" value="ATPase-IIC_X-K"/>
    <property type="match status" value="1"/>
</dbReference>
<dbReference type="NCBIfam" id="TIGR01494">
    <property type="entry name" value="ATPase_P-type"/>
    <property type="match status" value="2"/>
</dbReference>
<dbReference type="PANTHER" id="PTHR43294:SF10">
    <property type="entry name" value="POTASSIUM-TRANSPORTING ATPASE ALPHA CHAIN 1"/>
    <property type="match status" value="1"/>
</dbReference>
<dbReference type="PANTHER" id="PTHR43294">
    <property type="entry name" value="SODIUM/POTASSIUM-TRANSPORTING ATPASE SUBUNIT ALPHA"/>
    <property type="match status" value="1"/>
</dbReference>
<dbReference type="Pfam" id="PF13246">
    <property type="entry name" value="Cation_ATPase"/>
    <property type="match status" value="1"/>
</dbReference>
<dbReference type="Pfam" id="PF00689">
    <property type="entry name" value="Cation_ATPase_C"/>
    <property type="match status" value="1"/>
</dbReference>
<dbReference type="Pfam" id="PF00690">
    <property type="entry name" value="Cation_ATPase_N"/>
    <property type="match status" value="1"/>
</dbReference>
<dbReference type="Pfam" id="PF00122">
    <property type="entry name" value="E1-E2_ATPase"/>
    <property type="match status" value="1"/>
</dbReference>
<dbReference type="Pfam" id="PF09040">
    <property type="entry name" value="H-K_ATPase_N"/>
    <property type="match status" value="1"/>
</dbReference>
<dbReference type="Pfam" id="PF00702">
    <property type="entry name" value="Hydrolase"/>
    <property type="match status" value="1"/>
</dbReference>
<dbReference type="PRINTS" id="PR00119">
    <property type="entry name" value="CATATPASE"/>
</dbReference>
<dbReference type="PRINTS" id="PR00121">
    <property type="entry name" value="NAKATPASE"/>
</dbReference>
<dbReference type="SFLD" id="SFLDG00002">
    <property type="entry name" value="C1.7:_P-type_atpase_like"/>
    <property type="match status" value="1"/>
</dbReference>
<dbReference type="SFLD" id="SFLDF00027">
    <property type="entry name" value="p-type_atpase"/>
    <property type="match status" value="1"/>
</dbReference>
<dbReference type="SMART" id="SM00831">
    <property type="entry name" value="Cation_ATPase_N"/>
    <property type="match status" value="1"/>
</dbReference>
<dbReference type="SUPFAM" id="SSF81653">
    <property type="entry name" value="Calcium ATPase, transduction domain A"/>
    <property type="match status" value="1"/>
</dbReference>
<dbReference type="SUPFAM" id="SSF81665">
    <property type="entry name" value="Calcium ATPase, transmembrane domain M"/>
    <property type="match status" value="1"/>
</dbReference>
<dbReference type="SUPFAM" id="SSF56784">
    <property type="entry name" value="HAD-like"/>
    <property type="match status" value="1"/>
</dbReference>
<dbReference type="SUPFAM" id="SSF81660">
    <property type="entry name" value="Metal cation-transporting ATPase, ATP-binding domain N"/>
    <property type="match status" value="1"/>
</dbReference>
<dbReference type="PROSITE" id="PS00154">
    <property type="entry name" value="ATPASE_E1_E2"/>
    <property type="match status" value="1"/>
</dbReference>
<organism>
    <name type="scientific">Rattus norvegicus</name>
    <name type="common">Rat</name>
    <dbReference type="NCBI Taxonomy" id="10116"/>
    <lineage>
        <taxon>Eukaryota</taxon>
        <taxon>Metazoa</taxon>
        <taxon>Chordata</taxon>
        <taxon>Craniata</taxon>
        <taxon>Vertebrata</taxon>
        <taxon>Euteleostomi</taxon>
        <taxon>Mammalia</taxon>
        <taxon>Eutheria</taxon>
        <taxon>Euarchontoglires</taxon>
        <taxon>Glires</taxon>
        <taxon>Rodentia</taxon>
        <taxon>Myomorpha</taxon>
        <taxon>Muroidea</taxon>
        <taxon>Muridae</taxon>
        <taxon>Murinae</taxon>
        <taxon>Rattus</taxon>
    </lineage>
</organism>